<reference key="1">
    <citation type="submission" date="2008-08" db="EMBL/GenBank/DDBJ databases">
        <title>Complete sequence of Vibrio fischeri strain MJ11.</title>
        <authorList>
            <person name="Mandel M.J."/>
            <person name="Stabb E.V."/>
            <person name="Ruby E.G."/>
            <person name="Ferriera S."/>
            <person name="Johnson J."/>
            <person name="Kravitz S."/>
            <person name="Beeson K."/>
            <person name="Sutton G."/>
            <person name="Rogers Y.-H."/>
            <person name="Friedman R."/>
            <person name="Frazier M."/>
            <person name="Venter J.C."/>
        </authorList>
    </citation>
    <scope>NUCLEOTIDE SEQUENCE [LARGE SCALE GENOMIC DNA]</scope>
    <source>
        <strain>MJ11</strain>
    </source>
</reference>
<organism>
    <name type="scientific">Aliivibrio fischeri (strain MJ11)</name>
    <name type="common">Vibrio fischeri</name>
    <dbReference type="NCBI Taxonomy" id="388396"/>
    <lineage>
        <taxon>Bacteria</taxon>
        <taxon>Pseudomonadati</taxon>
        <taxon>Pseudomonadota</taxon>
        <taxon>Gammaproteobacteria</taxon>
        <taxon>Vibrionales</taxon>
        <taxon>Vibrionaceae</taxon>
        <taxon>Aliivibrio</taxon>
    </lineage>
</organism>
<sequence>MNFDTIIIGGGMAGLSCALRCLEAGLKTAVIASGQSALHFSSGSIDVLAKTPSGEPVSNPMTCIDTFAKEYPNHPYATLGKETVERAIDWYRNTLSTIGVPLTSQNNGLNHYRLTPLGAMKSTWLSQPFVHQFPMDLEKNKTQKMVLITIDGFRDFQPKLAQDNLKQITQLSDLEITTANISLSAFNDIQRNHCELRSIDLSRLLSKRANRQELAYALQQHAQPGDLVVIPSIFGNGTGLTYLKEIEQLTKLTLCEVPTMPPSLLGIRLEESMKHAFIELGGTMLNGDHVVQGEFSYVDKSDPEHSHYRLNRIFTKNHGDFPLQAKQFVLATGSFFSQGLKANVDSMIEPIFGLDIAQSDKRTDWYSHDFFSTQSHPFLSMGIKTTANFQAIKSGHVIDNLYCAGAILSGYNPILEGSGSGVAISSGFHAAESIIEQLQPNDFFQNNNIKAEVAL</sequence>
<dbReference type="EC" id="1.1.5.3" evidence="1"/>
<dbReference type="EMBL" id="CP001133">
    <property type="protein sequence ID" value="ACH63492.1"/>
    <property type="molecule type" value="Genomic_DNA"/>
</dbReference>
<dbReference type="RefSeq" id="WP_012534707.1">
    <property type="nucleotide sequence ID" value="NC_011186.1"/>
</dbReference>
<dbReference type="KEGG" id="vfm:VFMJ11_A0283"/>
<dbReference type="HOGENOM" id="CLU_047793_0_0_6"/>
<dbReference type="UniPathway" id="UPA00618">
    <property type="reaction ID" value="UER00673"/>
</dbReference>
<dbReference type="Proteomes" id="UP000001857">
    <property type="component" value="Chromosome II"/>
</dbReference>
<dbReference type="GO" id="GO:0009331">
    <property type="term" value="C:glycerol-3-phosphate dehydrogenase (FAD) complex"/>
    <property type="evidence" value="ECO:0007669"/>
    <property type="project" value="InterPro"/>
</dbReference>
<dbReference type="GO" id="GO:0004368">
    <property type="term" value="F:glycerol-3-phosphate dehydrogenase (quinone) activity"/>
    <property type="evidence" value="ECO:0007669"/>
    <property type="project" value="UniProtKB-UniRule"/>
</dbReference>
<dbReference type="GO" id="GO:0019563">
    <property type="term" value="P:glycerol catabolic process"/>
    <property type="evidence" value="ECO:0007669"/>
    <property type="project" value="UniProtKB-UniRule"/>
</dbReference>
<dbReference type="Gene3D" id="3.50.50.60">
    <property type="entry name" value="FAD/NAD(P)-binding domain"/>
    <property type="match status" value="1"/>
</dbReference>
<dbReference type="HAMAP" id="MF_00753">
    <property type="entry name" value="Glycerol3P_GlpB"/>
    <property type="match status" value="1"/>
</dbReference>
<dbReference type="InterPro" id="IPR003953">
    <property type="entry name" value="FAD-dep_OxRdtase_2_FAD-bd"/>
</dbReference>
<dbReference type="InterPro" id="IPR036188">
    <property type="entry name" value="FAD/NAD-bd_sf"/>
</dbReference>
<dbReference type="InterPro" id="IPR009158">
    <property type="entry name" value="G3P_DH_GlpB_su"/>
</dbReference>
<dbReference type="InterPro" id="IPR051691">
    <property type="entry name" value="Metab_Enz_Cyan_OpOx_G3PDH"/>
</dbReference>
<dbReference type="NCBIfam" id="TIGR03378">
    <property type="entry name" value="glycerol3P_GlpB"/>
    <property type="match status" value="1"/>
</dbReference>
<dbReference type="NCBIfam" id="NF003719">
    <property type="entry name" value="PRK05329.1-2"/>
    <property type="match status" value="1"/>
</dbReference>
<dbReference type="NCBIfam" id="NF003720">
    <property type="entry name" value="PRK05329.1-3"/>
    <property type="match status" value="1"/>
</dbReference>
<dbReference type="PANTHER" id="PTHR42949">
    <property type="entry name" value="ANAEROBIC GLYCEROL-3-PHOSPHATE DEHYDROGENASE SUBUNIT B"/>
    <property type="match status" value="1"/>
</dbReference>
<dbReference type="PANTHER" id="PTHR42949:SF3">
    <property type="entry name" value="ANAEROBIC GLYCEROL-3-PHOSPHATE DEHYDROGENASE SUBUNIT B"/>
    <property type="match status" value="1"/>
</dbReference>
<dbReference type="Pfam" id="PF00890">
    <property type="entry name" value="FAD_binding_2"/>
    <property type="match status" value="1"/>
</dbReference>
<dbReference type="PIRSF" id="PIRSF000141">
    <property type="entry name" value="Anaerobic_G3P_dh"/>
    <property type="match status" value="1"/>
</dbReference>
<dbReference type="SUPFAM" id="SSF51905">
    <property type="entry name" value="FAD/NAD(P)-binding domain"/>
    <property type="match status" value="1"/>
</dbReference>
<proteinExistence type="inferred from homology"/>
<evidence type="ECO:0000255" key="1">
    <source>
        <dbReference type="HAMAP-Rule" id="MF_00753"/>
    </source>
</evidence>
<accession>B5ET22</accession>
<name>GLPB_ALIFM</name>
<gene>
    <name evidence="1" type="primary">glpB</name>
    <name type="ordered locus">VFMJ11_A0283</name>
</gene>
<keyword id="KW-0285">Flavoprotein</keyword>
<keyword id="KW-0288">FMN</keyword>
<keyword id="KW-0560">Oxidoreductase</keyword>
<protein>
    <recommendedName>
        <fullName evidence="1">Anaerobic glycerol-3-phosphate dehydrogenase subunit B</fullName>
        <shortName evidence="1">Anaerobic G-3-P dehydrogenase subunit B</shortName>
        <shortName evidence="1">Anaerobic G3Pdhase B</shortName>
        <ecNumber evidence="1">1.1.5.3</ecNumber>
    </recommendedName>
</protein>
<feature type="chain" id="PRO_1000133376" description="Anaerobic glycerol-3-phosphate dehydrogenase subunit B">
    <location>
        <begin position="1"/>
        <end position="455"/>
    </location>
</feature>
<comment type="function">
    <text evidence="1">Conversion of glycerol 3-phosphate to dihydroxyacetone. Uses fumarate or nitrate as electron acceptor.</text>
</comment>
<comment type="catalytic activity">
    <reaction evidence="1">
        <text>a quinone + sn-glycerol 3-phosphate = dihydroxyacetone phosphate + a quinol</text>
        <dbReference type="Rhea" id="RHEA:18977"/>
        <dbReference type="ChEBI" id="CHEBI:24646"/>
        <dbReference type="ChEBI" id="CHEBI:57597"/>
        <dbReference type="ChEBI" id="CHEBI:57642"/>
        <dbReference type="ChEBI" id="CHEBI:132124"/>
        <dbReference type="EC" id="1.1.5.3"/>
    </reaction>
</comment>
<comment type="cofactor">
    <cofactor evidence="1">
        <name>FMN</name>
        <dbReference type="ChEBI" id="CHEBI:58210"/>
    </cofactor>
</comment>
<comment type="pathway">
    <text evidence="1">Polyol metabolism; glycerol degradation via glycerol kinase pathway; glycerone phosphate from sn-glycerol 3-phosphate (anaerobic route): step 1/1.</text>
</comment>
<comment type="subunit">
    <text evidence="1">Composed of a catalytic GlpA/B dimer and of membrane bound GlpC.</text>
</comment>
<comment type="similarity">
    <text evidence="1">Belongs to the anaerobic G-3-P dehydrogenase subunit B family.</text>
</comment>